<gene>
    <name type="primary">FAM27E3</name>
</gene>
<evidence type="ECO:0000256" key="1">
    <source>
        <dbReference type="SAM" id="MobiDB-lite"/>
    </source>
</evidence>
<evidence type="ECO:0000305" key="2"/>
<dbReference type="EMBL" id="BC119675">
    <property type="protein sequence ID" value="AAI19676.1"/>
    <property type="molecule type" value="mRNA"/>
</dbReference>
<dbReference type="FunCoup" id="Q08E93">
    <property type="interactions" value="12"/>
</dbReference>
<dbReference type="IntAct" id="Q08E93">
    <property type="interactions" value="9"/>
</dbReference>
<dbReference type="MINT" id="Q08E93"/>
<dbReference type="iPTMnet" id="Q08E93"/>
<dbReference type="PhosphoSitePlus" id="Q08E93"/>
<dbReference type="BioMuta" id="HGNC:28655"/>
<dbReference type="DMDM" id="119369432"/>
<dbReference type="MassIVE" id="Q08E93"/>
<dbReference type="AGR" id="HGNC:28655"/>
<dbReference type="GeneCards" id="FAM27E3"/>
<dbReference type="HGNC" id="HGNC:28655">
    <property type="gene designation" value="FAM27E3"/>
</dbReference>
<dbReference type="neXtProt" id="NX_Q08E93"/>
<dbReference type="PharmGKB" id="PA145148939"/>
<dbReference type="InParanoid" id="Q08E93"/>
<dbReference type="PAN-GO" id="Q08E93">
    <property type="GO annotations" value="0 GO annotations based on evolutionary models"/>
</dbReference>
<dbReference type="PhylomeDB" id="Q08E93"/>
<dbReference type="PathwayCommons" id="Q08E93"/>
<dbReference type="SignaLink" id="Q08E93"/>
<dbReference type="Pharos" id="Q08E93">
    <property type="development level" value="Tdark"/>
</dbReference>
<dbReference type="PRO" id="PR:Q08E93"/>
<dbReference type="Proteomes" id="UP000005640">
    <property type="component" value="Unplaced"/>
</dbReference>
<dbReference type="RNAct" id="Q08E93">
    <property type="molecule type" value="protein"/>
</dbReference>
<dbReference type="InterPro" id="IPR031672">
    <property type="entry name" value="FAM27D/FAM27E"/>
</dbReference>
<dbReference type="Pfam" id="PF15832">
    <property type="entry name" value="FAM27"/>
    <property type="match status" value="1"/>
</dbReference>
<proteinExistence type="evidence at protein level"/>
<feature type="chain" id="PRO_0000267202" description="Protein FAM27E3">
    <location>
        <begin position="1"/>
        <end position="113"/>
    </location>
</feature>
<feature type="region of interest" description="Disordered" evidence="1">
    <location>
        <begin position="1"/>
        <end position="113"/>
    </location>
</feature>
<feature type="compositionally biased region" description="Basic and acidic residues" evidence="1">
    <location>
        <begin position="77"/>
        <end position="99"/>
    </location>
</feature>
<feature type="compositionally biased region" description="Basic residues" evidence="1">
    <location>
        <begin position="100"/>
        <end position="113"/>
    </location>
</feature>
<organism>
    <name type="scientific">Homo sapiens</name>
    <name type="common">Human</name>
    <dbReference type="NCBI Taxonomy" id="9606"/>
    <lineage>
        <taxon>Eukaryota</taxon>
        <taxon>Metazoa</taxon>
        <taxon>Chordata</taxon>
        <taxon>Craniata</taxon>
        <taxon>Vertebrata</taxon>
        <taxon>Euteleostomi</taxon>
        <taxon>Mammalia</taxon>
        <taxon>Eutheria</taxon>
        <taxon>Euarchontoglires</taxon>
        <taxon>Primates</taxon>
        <taxon>Haplorrhini</taxon>
        <taxon>Catarrhini</taxon>
        <taxon>Hominidae</taxon>
        <taxon>Homo</taxon>
    </lineage>
</organism>
<reference key="1">
    <citation type="journal article" date="2004" name="Genome Res.">
        <title>The status, quality, and expansion of the NIH full-length cDNA project: the Mammalian Gene Collection (MGC).</title>
        <authorList>
            <consortium name="The MGC Project Team"/>
        </authorList>
    </citation>
    <scope>NUCLEOTIDE SEQUENCE [LARGE SCALE MRNA]</scope>
</reference>
<accession>Q08E93</accession>
<protein>
    <recommendedName>
        <fullName>Protein FAM27E3</fullName>
    </recommendedName>
</protein>
<comment type="interaction">
    <interactant intactId="EBI-2602739">
        <id>Q08E93</id>
    </interactant>
    <interactant intactId="EBI-10171697">
        <id>Q6A162</id>
        <label>KRT40</label>
    </interactant>
    <organismsDiffer>false</organismsDiffer>
    <experiments>3</experiments>
</comment>
<comment type="interaction">
    <interactant intactId="EBI-2602739">
        <id>Q08E93</id>
    </interactant>
    <interactant intactId="EBI-10172290">
        <id>P60409</id>
        <label>KRTAP10-7</label>
    </interactant>
    <organismsDiffer>false</organismsDiffer>
    <experiments>3</experiments>
</comment>
<comment type="interaction">
    <interactant intactId="EBI-2602739">
        <id>Q08E93</id>
    </interactant>
    <interactant intactId="EBI-10171774">
        <id>P60410</id>
        <label>KRTAP10-8</label>
    </interactant>
    <organismsDiffer>false</organismsDiffer>
    <experiments>3</experiments>
</comment>
<comment type="interaction">
    <interactant intactId="EBI-2602739">
        <id>Q08E93</id>
    </interactant>
    <interactant intactId="EBI-10176379">
        <id>P59991</id>
        <label>KRTAP12-2</label>
    </interactant>
    <organismsDiffer>false</organismsDiffer>
    <experiments>3</experiments>
</comment>
<comment type="interaction">
    <interactant intactId="EBI-2602739">
        <id>Q08E93</id>
    </interactant>
    <interactant intactId="EBI-724076">
        <id>Q99750</id>
        <label>MDFI</label>
    </interactant>
    <organismsDiffer>false</organismsDiffer>
    <experiments>3</experiments>
</comment>
<comment type="similarity">
    <text evidence="2">Belongs to the FAM27 family.</text>
</comment>
<keyword id="KW-1185">Reference proteome</keyword>
<sequence>MGIFQLLRDRRISSRGPGLHTPKAEPRRRKGLTTGLMTQAERQKQAHQRQAAMRETALWCTGHIRPRTHTHTGTHTQTDRERERNTQRLRDRERRENGRHTHTYTHRHTHRVL</sequence>
<name>F27E3_HUMAN</name>